<feature type="chain" id="PRO_0000303642" description="tRNA N6-adenosine threonylcarbamoyltransferase">
    <location>
        <begin position="1"/>
        <end position="325"/>
    </location>
</feature>
<feature type="binding site" evidence="1">
    <location>
        <position position="107"/>
    </location>
    <ligand>
        <name>Fe cation</name>
        <dbReference type="ChEBI" id="CHEBI:24875"/>
    </ligand>
</feature>
<feature type="binding site" evidence="1">
    <location>
        <position position="111"/>
    </location>
    <ligand>
        <name>Fe cation</name>
        <dbReference type="ChEBI" id="CHEBI:24875"/>
    </ligand>
</feature>
<feature type="binding site" evidence="1">
    <location>
        <begin position="127"/>
        <end position="131"/>
    </location>
    <ligand>
        <name>substrate</name>
    </ligand>
</feature>
<feature type="binding site" evidence="1">
    <location>
        <position position="127"/>
    </location>
    <ligand>
        <name>Fe cation</name>
        <dbReference type="ChEBI" id="CHEBI:24875"/>
    </ligand>
</feature>
<feature type="binding site" evidence="1">
    <location>
        <position position="159"/>
    </location>
    <ligand>
        <name>substrate</name>
    </ligand>
</feature>
<feature type="binding site" evidence="1">
    <location>
        <position position="172"/>
    </location>
    <ligand>
        <name>substrate</name>
    </ligand>
</feature>
<feature type="binding site" evidence="1">
    <location>
        <position position="176"/>
    </location>
    <ligand>
        <name>substrate</name>
    </ligand>
</feature>
<feature type="binding site" evidence="1">
    <location>
        <position position="257"/>
    </location>
    <ligand>
        <name>substrate</name>
    </ligand>
</feature>
<feature type="binding site" evidence="1">
    <location>
        <position position="285"/>
    </location>
    <ligand>
        <name>Fe cation</name>
        <dbReference type="ChEBI" id="CHEBI:24875"/>
    </ligand>
</feature>
<reference key="1">
    <citation type="journal article" date="2005" name="Genome Res.">
        <title>Complete genome sequence of the hyperthermophilic archaeon Thermococcus kodakaraensis KOD1 and comparison with Pyrococcus genomes.</title>
        <authorList>
            <person name="Fukui T."/>
            <person name="Atomi H."/>
            <person name="Kanai T."/>
            <person name="Matsumi R."/>
            <person name="Fujiwara S."/>
            <person name="Imanaka T."/>
        </authorList>
    </citation>
    <scope>NUCLEOTIDE SEQUENCE [LARGE SCALE GENOMIC DNA]</scope>
    <source>
        <strain>ATCC BAA-918 / JCM 12380 / KOD1</strain>
    </source>
</reference>
<proteinExistence type="inferred from homology"/>
<protein>
    <recommendedName>
        <fullName evidence="1">tRNA N6-adenosine threonylcarbamoyltransferase</fullName>
        <ecNumber evidence="1">2.3.1.234</ecNumber>
    </recommendedName>
    <alternativeName>
        <fullName evidence="1">N6-L-threonylcarbamoyladenine synthase</fullName>
        <shortName evidence="1">t(6)A synthase</shortName>
    </alternativeName>
    <alternativeName>
        <fullName evidence="1">t(6)A37 threonylcarbamoyladenosine biosynthesis protein Kae1</fullName>
    </alternativeName>
    <alternativeName>
        <fullName evidence="1">tRNA threonylcarbamoyladenosine biosynthesis protein Kae1</fullName>
    </alternativeName>
</protein>
<name>KAE1_THEKO</name>
<dbReference type="EC" id="2.3.1.234" evidence="1"/>
<dbReference type="EMBL" id="AP006878">
    <property type="protein sequence ID" value="BAD86315.1"/>
    <property type="molecule type" value="Genomic_DNA"/>
</dbReference>
<dbReference type="RefSeq" id="WP_011251076.1">
    <property type="nucleotide sequence ID" value="NC_006624.1"/>
</dbReference>
<dbReference type="SMR" id="Q5JEW3"/>
<dbReference type="FunCoup" id="Q5JEW3">
    <property type="interactions" value="148"/>
</dbReference>
<dbReference type="STRING" id="69014.TK2126"/>
<dbReference type="EnsemblBacteria" id="BAD86315">
    <property type="protein sequence ID" value="BAD86315"/>
    <property type="gene ID" value="TK2126"/>
</dbReference>
<dbReference type="GeneID" id="78448661"/>
<dbReference type="KEGG" id="tko:TK2126"/>
<dbReference type="PATRIC" id="fig|69014.16.peg.2082"/>
<dbReference type="eggNOG" id="arCOG01183">
    <property type="taxonomic scope" value="Archaea"/>
</dbReference>
<dbReference type="HOGENOM" id="CLU_023208_2_2_2"/>
<dbReference type="InParanoid" id="Q5JEW3"/>
<dbReference type="OrthoDB" id="6818at2157"/>
<dbReference type="PhylomeDB" id="Q5JEW3"/>
<dbReference type="Proteomes" id="UP000000536">
    <property type="component" value="Chromosome"/>
</dbReference>
<dbReference type="GO" id="GO:0005737">
    <property type="term" value="C:cytoplasm"/>
    <property type="evidence" value="ECO:0000318"/>
    <property type="project" value="GO_Central"/>
</dbReference>
<dbReference type="GO" id="GO:0000408">
    <property type="term" value="C:EKC/KEOPS complex"/>
    <property type="evidence" value="ECO:0000318"/>
    <property type="project" value="GO_Central"/>
</dbReference>
<dbReference type="GO" id="GO:0005506">
    <property type="term" value="F:iron ion binding"/>
    <property type="evidence" value="ECO:0007669"/>
    <property type="project" value="UniProtKB-UniRule"/>
</dbReference>
<dbReference type="GO" id="GO:0061711">
    <property type="term" value="F:N(6)-L-threonylcarbamoyladenine synthase activity"/>
    <property type="evidence" value="ECO:0007669"/>
    <property type="project" value="UniProtKB-EC"/>
</dbReference>
<dbReference type="GO" id="GO:0002949">
    <property type="term" value="P:tRNA threonylcarbamoyladenosine modification"/>
    <property type="evidence" value="ECO:0007669"/>
    <property type="project" value="UniProtKB-UniRule"/>
</dbReference>
<dbReference type="CDD" id="cd24131">
    <property type="entry name" value="ASKHA_NBD_Kae1_arch_bac"/>
    <property type="match status" value="1"/>
</dbReference>
<dbReference type="FunFam" id="3.30.420.40:FF:000038">
    <property type="entry name" value="Probable tRNA N6-adenosine threonylcarbamoyltransferase"/>
    <property type="match status" value="1"/>
</dbReference>
<dbReference type="Gene3D" id="3.30.420.40">
    <property type="match status" value="2"/>
</dbReference>
<dbReference type="HAMAP" id="MF_01446">
    <property type="entry name" value="Kae1"/>
    <property type="match status" value="1"/>
</dbReference>
<dbReference type="InterPro" id="IPR043129">
    <property type="entry name" value="ATPase_NBD"/>
</dbReference>
<dbReference type="InterPro" id="IPR000905">
    <property type="entry name" value="Gcp-like_dom"/>
</dbReference>
<dbReference type="InterPro" id="IPR017861">
    <property type="entry name" value="KAE1/TsaD"/>
</dbReference>
<dbReference type="InterPro" id="IPR034680">
    <property type="entry name" value="Kae1_archaea_euk"/>
</dbReference>
<dbReference type="InterPro" id="IPR017860">
    <property type="entry name" value="Peptidase_M22_CS"/>
</dbReference>
<dbReference type="NCBIfam" id="TIGR03722">
    <property type="entry name" value="arch_KAE1"/>
    <property type="match status" value="1"/>
</dbReference>
<dbReference type="NCBIfam" id="TIGR00329">
    <property type="entry name" value="gcp_kae1"/>
    <property type="match status" value="1"/>
</dbReference>
<dbReference type="NCBIfam" id="NF007174">
    <property type="entry name" value="PRK09605.1"/>
    <property type="match status" value="1"/>
</dbReference>
<dbReference type="PANTHER" id="PTHR11735">
    <property type="entry name" value="TRNA N6-ADENOSINE THREONYLCARBAMOYLTRANSFERASE"/>
    <property type="match status" value="1"/>
</dbReference>
<dbReference type="PANTHER" id="PTHR11735:SF14">
    <property type="entry name" value="TRNA N6-ADENOSINE THREONYLCARBAMOYLTRANSFERASE"/>
    <property type="match status" value="1"/>
</dbReference>
<dbReference type="Pfam" id="PF00814">
    <property type="entry name" value="TsaD"/>
    <property type="match status" value="1"/>
</dbReference>
<dbReference type="PRINTS" id="PR00789">
    <property type="entry name" value="OSIALOPTASE"/>
</dbReference>
<dbReference type="SUPFAM" id="SSF53067">
    <property type="entry name" value="Actin-like ATPase domain"/>
    <property type="match status" value="1"/>
</dbReference>
<dbReference type="PROSITE" id="PS01016">
    <property type="entry name" value="GLYCOPROTEASE"/>
    <property type="match status" value="1"/>
</dbReference>
<sequence>MIALGIEGTAHTLGIGIVTEKSVLANVFDTLTTEKGGIHPKEAAEHHARLLKPLLRKALETAGVTMEDVDLIAFSQGPGLGPALRVVATAARALAIKYNKPIVGVNHCIAHVEITKMFGVKDPVGLYVSGGNTQVLALEGGRYRVFGETLDIGIGNAIDTFARELGIGFPGGPKIEKLALKGEKYIELPYAVKGMDLSFSGVLTEAVRKYRTGKYRIEDLAYSFQETAFAALVEVTERAVAHTGKEEVVLVGGVAANNRLREMLKIMAEDRGIKFFVPPYDLCRDNGAMIAYTGLRMYRGGVRFKIEDTVVKQKFRTDEVEVVWD</sequence>
<keyword id="KW-0012">Acyltransferase</keyword>
<keyword id="KW-0963">Cytoplasm</keyword>
<keyword id="KW-0408">Iron</keyword>
<keyword id="KW-0479">Metal-binding</keyword>
<keyword id="KW-1185">Reference proteome</keyword>
<keyword id="KW-0808">Transferase</keyword>
<keyword id="KW-0819">tRNA processing</keyword>
<organism>
    <name type="scientific">Thermococcus kodakarensis (strain ATCC BAA-918 / JCM 12380 / KOD1)</name>
    <name type="common">Pyrococcus kodakaraensis (strain KOD1)</name>
    <dbReference type="NCBI Taxonomy" id="69014"/>
    <lineage>
        <taxon>Archaea</taxon>
        <taxon>Methanobacteriati</taxon>
        <taxon>Methanobacteriota</taxon>
        <taxon>Thermococci</taxon>
        <taxon>Thermococcales</taxon>
        <taxon>Thermococcaceae</taxon>
        <taxon>Thermococcus</taxon>
    </lineage>
</organism>
<gene>
    <name evidence="1" type="primary">kae1</name>
    <name type="ordered locus">TK2126</name>
</gene>
<comment type="function">
    <text evidence="1">Required for the formation of a threonylcarbamoyl group on adenosine at position 37 (t(6)A37) in tRNAs that read codons beginning with adenine. Is a component of the KEOPS complex that is probably involved in the transfer of the threonylcarbamoyl moiety of threonylcarbamoyl-AMP (TC-AMP) to the N6 group of A37. Kae1 likely plays a direct catalytic role in this reaction, but requires other protein(s) of the complex to fulfill this activity.</text>
</comment>
<comment type="catalytic activity">
    <reaction evidence="1">
        <text>L-threonylcarbamoyladenylate + adenosine(37) in tRNA = N(6)-L-threonylcarbamoyladenosine(37) in tRNA + AMP + H(+)</text>
        <dbReference type="Rhea" id="RHEA:37059"/>
        <dbReference type="Rhea" id="RHEA-COMP:10162"/>
        <dbReference type="Rhea" id="RHEA-COMP:10163"/>
        <dbReference type="ChEBI" id="CHEBI:15378"/>
        <dbReference type="ChEBI" id="CHEBI:73682"/>
        <dbReference type="ChEBI" id="CHEBI:74411"/>
        <dbReference type="ChEBI" id="CHEBI:74418"/>
        <dbReference type="ChEBI" id="CHEBI:456215"/>
        <dbReference type="EC" id="2.3.1.234"/>
    </reaction>
</comment>
<comment type="cofactor">
    <cofactor evidence="1">
        <name>Fe(2+)</name>
        <dbReference type="ChEBI" id="CHEBI:29033"/>
    </cofactor>
    <text evidence="1">Binds 1 Fe(2+) ion per subunit.</text>
</comment>
<comment type="subunit">
    <text evidence="1">Monomer. Component of the KEOPS complex that consists of Kae1, Bud32, Cgi121 and Pcc1; the whole complex dimerizes.</text>
</comment>
<comment type="subcellular location">
    <subcellularLocation>
        <location evidence="1">Cytoplasm</location>
    </subcellularLocation>
</comment>
<comment type="similarity">
    <text evidence="1">Belongs to the KAE1 / TsaD family.</text>
</comment>
<accession>Q5JEW3</accession>
<evidence type="ECO:0000255" key="1">
    <source>
        <dbReference type="HAMAP-Rule" id="MF_01446"/>
    </source>
</evidence>